<accession>Q9U4X4</accession>
<dbReference type="EC" id="1.15.1.1"/>
<dbReference type="EMBL" id="AF127156">
    <property type="protein sequence ID" value="AAF23595.1"/>
    <property type="molecule type" value="Genomic_DNA"/>
</dbReference>
<dbReference type="SMR" id="Q9U4X4"/>
<dbReference type="eggNOG" id="KOG0441">
    <property type="taxonomic scope" value="Eukaryota"/>
</dbReference>
<dbReference type="OrthoDB" id="2015551at2759"/>
<dbReference type="GO" id="GO:0005777">
    <property type="term" value="C:peroxisome"/>
    <property type="evidence" value="ECO:0007669"/>
    <property type="project" value="EnsemblMetazoa"/>
</dbReference>
<dbReference type="GO" id="GO:0005507">
    <property type="term" value="F:copper ion binding"/>
    <property type="evidence" value="ECO:0007669"/>
    <property type="project" value="InterPro"/>
</dbReference>
<dbReference type="GO" id="GO:0042803">
    <property type="term" value="F:protein homodimerization activity"/>
    <property type="evidence" value="ECO:0007669"/>
    <property type="project" value="EnsemblMetazoa"/>
</dbReference>
<dbReference type="GO" id="GO:0004784">
    <property type="term" value="F:superoxide dismutase activity"/>
    <property type="evidence" value="ECO:0007669"/>
    <property type="project" value="UniProtKB-EC"/>
</dbReference>
<dbReference type="GO" id="GO:0008340">
    <property type="term" value="P:determination of adult lifespan"/>
    <property type="evidence" value="ECO:0007669"/>
    <property type="project" value="EnsemblMetazoa"/>
</dbReference>
<dbReference type="GO" id="GO:1901526">
    <property type="term" value="P:positive regulation of mitophagy"/>
    <property type="evidence" value="ECO:0007669"/>
    <property type="project" value="EnsemblMetazoa"/>
</dbReference>
<dbReference type="GO" id="GO:0048167">
    <property type="term" value="P:regulation of synaptic plasticity"/>
    <property type="evidence" value="ECO:0007669"/>
    <property type="project" value="EnsemblMetazoa"/>
</dbReference>
<dbReference type="CDD" id="cd00305">
    <property type="entry name" value="Cu-Zn_Superoxide_Dismutase"/>
    <property type="match status" value="1"/>
</dbReference>
<dbReference type="FunFam" id="2.60.40.200:FF:000001">
    <property type="entry name" value="Superoxide dismutase [Cu-Zn]"/>
    <property type="match status" value="1"/>
</dbReference>
<dbReference type="Gene3D" id="2.60.40.200">
    <property type="entry name" value="Superoxide dismutase, copper/zinc binding domain"/>
    <property type="match status" value="1"/>
</dbReference>
<dbReference type="InterPro" id="IPR036423">
    <property type="entry name" value="SOD-like_Cu/Zn_dom_sf"/>
</dbReference>
<dbReference type="InterPro" id="IPR024134">
    <property type="entry name" value="SOD_Cu/Zn_/chaperone"/>
</dbReference>
<dbReference type="InterPro" id="IPR018152">
    <property type="entry name" value="SOD_Cu/Zn_BS"/>
</dbReference>
<dbReference type="InterPro" id="IPR001424">
    <property type="entry name" value="SOD_Cu_Zn_dom"/>
</dbReference>
<dbReference type="PANTHER" id="PTHR10003">
    <property type="entry name" value="SUPEROXIDE DISMUTASE CU-ZN -RELATED"/>
    <property type="match status" value="1"/>
</dbReference>
<dbReference type="Pfam" id="PF00080">
    <property type="entry name" value="Sod_Cu"/>
    <property type="match status" value="1"/>
</dbReference>
<dbReference type="PRINTS" id="PR00068">
    <property type="entry name" value="CUZNDISMTASE"/>
</dbReference>
<dbReference type="SUPFAM" id="SSF49329">
    <property type="entry name" value="Cu,Zn superoxide dismutase-like"/>
    <property type="match status" value="1"/>
</dbReference>
<dbReference type="PROSITE" id="PS00087">
    <property type="entry name" value="SOD_CU_ZN_1"/>
    <property type="match status" value="1"/>
</dbReference>
<dbReference type="PROSITE" id="PS00332">
    <property type="entry name" value="SOD_CU_ZN_2"/>
    <property type="match status" value="1"/>
</dbReference>
<comment type="function">
    <text>Destroys radicals which are normally produced within the cells and which are toxic to biological systems.</text>
</comment>
<comment type="catalytic activity">
    <reaction>
        <text>2 superoxide + 2 H(+) = H2O2 + O2</text>
        <dbReference type="Rhea" id="RHEA:20696"/>
        <dbReference type="ChEBI" id="CHEBI:15378"/>
        <dbReference type="ChEBI" id="CHEBI:15379"/>
        <dbReference type="ChEBI" id="CHEBI:16240"/>
        <dbReference type="ChEBI" id="CHEBI:18421"/>
        <dbReference type="EC" id="1.15.1.1"/>
    </reaction>
</comment>
<comment type="cofactor">
    <cofactor evidence="1">
        <name>Cu cation</name>
        <dbReference type="ChEBI" id="CHEBI:23378"/>
    </cofactor>
    <text evidence="1">Binds 1 copper ion per subunit.</text>
</comment>
<comment type="cofactor">
    <cofactor evidence="1">
        <name>Zn(2+)</name>
        <dbReference type="ChEBI" id="CHEBI:29105"/>
    </cofactor>
    <text evidence="1">Binds 1 zinc ion per subunit.</text>
</comment>
<comment type="subunit">
    <text evidence="1">Homodimer.</text>
</comment>
<comment type="subcellular location">
    <subcellularLocation>
        <location evidence="1">Cytoplasm</location>
    </subcellularLocation>
</comment>
<comment type="similarity">
    <text evidence="3">Belongs to the Cu-Zn superoxide dismutase family.</text>
</comment>
<reference key="1">
    <citation type="submission" date="1999-02" db="EMBL/GenBank/DDBJ databases">
        <title>Phylogenetic analysis of Drosophila melanogaster group based on Cu-Zn superoxide dismutase gene sequences.</title>
        <authorList>
            <person name="Arxontaki K."/>
            <person name="Kastanis P."/>
            <person name="Tsakas S."/>
            <person name="Loukas M."/>
            <person name="Eliopoulos E."/>
        </authorList>
    </citation>
    <scope>NUCLEOTIDE SEQUENCE [GENOMIC DNA]</scope>
</reference>
<protein>
    <recommendedName>
        <fullName evidence="2">Superoxide dismutase [Cu-Zn]</fullName>
        <ecNumber>1.15.1.1</ecNumber>
    </recommendedName>
    <alternativeName>
        <fullName evidence="2">Superoxide dismutase 1</fullName>
    </alternativeName>
</protein>
<organism>
    <name type="scientific">Drosophila erecta</name>
    <name type="common">Fruit fly</name>
    <dbReference type="NCBI Taxonomy" id="7220"/>
    <lineage>
        <taxon>Eukaryota</taxon>
        <taxon>Metazoa</taxon>
        <taxon>Ecdysozoa</taxon>
        <taxon>Arthropoda</taxon>
        <taxon>Hexapoda</taxon>
        <taxon>Insecta</taxon>
        <taxon>Pterygota</taxon>
        <taxon>Neoptera</taxon>
        <taxon>Endopterygota</taxon>
        <taxon>Diptera</taxon>
        <taxon>Brachycera</taxon>
        <taxon>Muscomorpha</taxon>
        <taxon>Ephydroidea</taxon>
        <taxon>Drosophilidae</taxon>
        <taxon>Drosophila</taxon>
        <taxon>Sophophora</taxon>
    </lineage>
</organism>
<name>SODC_DROER</name>
<evidence type="ECO:0000250" key="1"/>
<evidence type="ECO:0000250" key="2">
    <source>
        <dbReference type="UniProtKB" id="P61851"/>
    </source>
</evidence>
<evidence type="ECO:0000305" key="3"/>
<keyword id="KW-0049">Antioxidant</keyword>
<keyword id="KW-0186">Copper</keyword>
<keyword id="KW-0963">Cytoplasm</keyword>
<keyword id="KW-1015">Disulfide bond</keyword>
<keyword id="KW-0479">Metal-binding</keyword>
<keyword id="KW-0560">Oxidoreductase</keyword>
<keyword id="KW-0862">Zinc</keyword>
<gene>
    <name evidence="2" type="primary">Sod1</name>
    <name evidence="2" type="synonym">Sod</name>
</gene>
<feature type="initiator methionine" description="Removed" evidence="1">
    <location>
        <position position="1"/>
    </location>
</feature>
<feature type="chain" id="PRO_0000164084" description="Superoxide dismutase [Cu-Zn]">
    <location>
        <begin position="2"/>
        <end position="153"/>
    </location>
</feature>
<feature type="binding site" evidence="1">
    <location>
        <position position="45"/>
    </location>
    <ligand>
        <name>Cu cation</name>
        <dbReference type="ChEBI" id="CHEBI:23378"/>
        <note>catalytic</note>
    </ligand>
</feature>
<feature type="binding site" evidence="1">
    <location>
        <position position="47"/>
    </location>
    <ligand>
        <name>Cu cation</name>
        <dbReference type="ChEBI" id="CHEBI:23378"/>
        <note>catalytic</note>
    </ligand>
</feature>
<feature type="binding site" evidence="1">
    <location>
        <position position="62"/>
    </location>
    <ligand>
        <name>Cu cation</name>
        <dbReference type="ChEBI" id="CHEBI:23378"/>
        <note>catalytic</note>
    </ligand>
</feature>
<feature type="binding site" evidence="1">
    <location>
        <position position="62"/>
    </location>
    <ligand>
        <name>Zn(2+)</name>
        <dbReference type="ChEBI" id="CHEBI:29105"/>
        <note>structural</note>
    </ligand>
</feature>
<feature type="binding site" evidence="1">
    <location>
        <position position="70"/>
    </location>
    <ligand>
        <name>Zn(2+)</name>
        <dbReference type="ChEBI" id="CHEBI:29105"/>
        <note>structural</note>
    </ligand>
</feature>
<feature type="binding site" evidence="1">
    <location>
        <position position="79"/>
    </location>
    <ligand>
        <name>Zn(2+)</name>
        <dbReference type="ChEBI" id="CHEBI:29105"/>
        <note>structural</note>
    </ligand>
</feature>
<feature type="binding site" evidence="1">
    <location>
        <position position="82"/>
    </location>
    <ligand>
        <name>Zn(2+)</name>
        <dbReference type="ChEBI" id="CHEBI:29105"/>
        <note>structural</note>
    </ligand>
</feature>
<feature type="binding site" evidence="1">
    <location>
        <position position="119"/>
    </location>
    <ligand>
        <name>Cu cation</name>
        <dbReference type="ChEBI" id="CHEBI:23378"/>
        <note>catalytic</note>
    </ligand>
</feature>
<feature type="disulfide bond" evidence="1">
    <location>
        <begin position="56"/>
        <end position="145"/>
    </location>
</feature>
<proteinExistence type="inferred from homology"/>
<sequence>MVVKAVCVINGDAKGTVFFEQESSETPVKVSGEVCGLAKCLHGFHVHEFGDNTNGCMSSGPHFNPHGKEHGAPVDENRHLGDLGNIEATGDCPTKVSITDSKITLFGADSIIGRTVVVHADADDLGKGGHELSKSTGNAGARIGCGVIGIAKV</sequence>